<name>UPPP_BRUAB</name>
<keyword id="KW-0046">Antibiotic resistance</keyword>
<keyword id="KW-0997">Cell inner membrane</keyword>
<keyword id="KW-1003">Cell membrane</keyword>
<keyword id="KW-0133">Cell shape</keyword>
<keyword id="KW-0961">Cell wall biogenesis/degradation</keyword>
<keyword id="KW-0378">Hydrolase</keyword>
<keyword id="KW-0472">Membrane</keyword>
<keyword id="KW-0573">Peptidoglycan synthesis</keyword>
<keyword id="KW-0812">Transmembrane</keyword>
<keyword id="KW-1133">Transmembrane helix</keyword>
<reference key="1">
    <citation type="journal article" date="2005" name="J. Bacteriol.">
        <title>Completion of the genome sequence of Brucella abortus and comparison to the highly similar genomes of Brucella melitensis and Brucella suis.</title>
        <authorList>
            <person name="Halling S.M."/>
            <person name="Peterson-Burch B.D."/>
            <person name="Bricker B.J."/>
            <person name="Zuerner R.L."/>
            <person name="Qing Z."/>
            <person name="Li L.-L."/>
            <person name="Kapur V."/>
            <person name="Alt D.P."/>
            <person name="Olsen S.C."/>
        </authorList>
    </citation>
    <scope>NUCLEOTIDE SEQUENCE [LARGE SCALE GENOMIC DNA]</scope>
    <source>
        <strain>9-941</strain>
    </source>
</reference>
<protein>
    <recommendedName>
        <fullName evidence="1">Undecaprenyl-diphosphatase</fullName>
        <ecNumber evidence="1">3.6.1.27</ecNumber>
    </recommendedName>
    <alternativeName>
        <fullName evidence="1">Bacitracin resistance protein</fullName>
    </alternativeName>
    <alternativeName>
        <fullName evidence="1">Undecaprenyl pyrophosphate phosphatase</fullName>
    </alternativeName>
</protein>
<comment type="function">
    <text evidence="1">Catalyzes the dephosphorylation of undecaprenyl diphosphate (UPP). Confers resistance to bacitracin.</text>
</comment>
<comment type="catalytic activity">
    <reaction evidence="1">
        <text>di-trans,octa-cis-undecaprenyl diphosphate + H2O = di-trans,octa-cis-undecaprenyl phosphate + phosphate + H(+)</text>
        <dbReference type="Rhea" id="RHEA:28094"/>
        <dbReference type="ChEBI" id="CHEBI:15377"/>
        <dbReference type="ChEBI" id="CHEBI:15378"/>
        <dbReference type="ChEBI" id="CHEBI:43474"/>
        <dbReference type="ChEBI" id="CHEBI:58405"/>
        <dbReference type="ChEBI" id="CHEBI:60392"/>
        <dbReference type="EC" id="3.6.1.27"/>
    </reaction>
</comment>
<comment type="subcellular location">
    <subcellularLocation>
        <location evidence="1">Cell inner membrane</location>
        <topology evidence="1">Multi-pass membrane protein</topology>
    </subcellularLocation>
</comment>
<comment type="miscellaneous">
    <text>Bacitracin is thought to be involved in the inhibition of peptidoglycan synthesis by sequestering undecaprenyl diphosphate, thereby reducing the pool of lipid carrier available.</text>
</comment>
<comment type="similarity">
    <text evidence="1">Belongs to the UppP family.</text>
</comment>
<accession>Q576S3</accession>
<gene>
    <name evidence="1" type="primary">uppP</name>
    <name type="ordered locus">BruAb2_0982</name>
</gene>
<evidence type="ECO:0000255" key="1">
    <source>
        <dbReference type="HAMAP-Rule" id="MF_01006"/>
    </source>
</evidence>
<organism>
    <name type="scientific">Brucella abortus biovar 1 (strain 9-941)</name>
    <dbReference type="NCBI Taxonomy" id="262698"/>
    <lineage>
        <taxon>Bacteria</taxon>
        <taxon>Pseudomonadati</taxon>
        <taxon>Pseudomonadota</taxon>
        <taxon>Alphaproteobacteria</taxon>
        <taxon>Hyphomicrobiales</taxon>
        <taxon>Brucellaceae</taxon>
        <taxon>Brucella/Ochrobactrum group</taxon>
        <taxon>Brucella</taxon>
    </lineage>
</organism>
<feature type="chain" id="PRO_0000151119" description="Undecaprenyl-diphosphatase">
    <location>
        <begin position="1"/>
        <end position="268"/>
    </location>
</feature>
<feature type="transmembrane region" description="Helical" evidence="1">
    <location>
        <begin position="3"/>
        <end position="23"/>
    </location>
</feature>
<feature type="transmembrane region" description="Helical" evidence="1">
    <location>
        <begin position="46"/>
        <end position="66"/>
    </location>
</feature>
<feature type="transmembrane region" description="Helical" evidence="1">
    <location>
        <begin position="84"/>
        <end position="104"/>
    </location>
</feature>
<feature type="transmembrane region" description="Helical" evidence="1">
    <location>
        <begin position="107"/>
        <end position="127"/>
    </location>
</feature>
<feature type="transmembrane region" description="Helical" evidence="1">
    <location>
        <begin position="144"/>
        <end position="164"/>
    </location>
</feature>
<feature type="transmembrane region" description="Helical" evidence="1">
    <location>
        <begin position="185"/>
        <end position="205"/>
    </location>
</feature>
<feature type="transmembrane region" description="Helical" evidence="1">
    <location>
        <begin position="213"/>
        <end position="233"/>
    </location>
</feature>
<feature type="transmembrane region" description="Helical" evidence="1">
    <location>
        <begin position="246"/>
        <end position="266"/>
    </location>
</feature>
<sequence>MDFFNLLEAAFLGLIEGLTEFIPVSSTGHLLLIGHFLGFESTGKTFEVLIQLGAILAILSVYSAKLARIATDFPRDARTRRFVLGVLVAFLPAAVIGALAHGFIKGVLFETPMLVCIMLIVGGFILLWVDQLNLRPRYHNVMDYPLPICLAIGFIQCLAMIPGVSRSGSTIVGSLLLGADKRSAAEFSFFLAMPTMAGAFAYDLFKSRNILSFNDGALIVVGFIMAFISGVFVVRHLLDYVSRHGFALFGWWRLIVGSAGMAALIIWG</sequence>
<dbReference type="EC" id="3.6.1.27" evidence="1"/>
<dbReference type="EMBL" id="AE017224">
    <property type="protein sequence ID" value="AAX76361.1"/>
    <property type="molecule type" value="Genomic_DNA"/>
</dbReference>
<dbReference type="RefSeq" id="WP_002965610.1">
    <property type="nucleotide sequence ID" value="NC_006933.1"/>
</dbReference>
<dbReference type="SMR" id="Q576S3"/>
<dbReference type="EnsemblBacteria" id="AAX76361">
    <property type="protein sequence ID" value="AAX76361"/>
    <property type="gene ID" value="BruAb2_0982"/>
</dbReference>
<dbReference type="KEGG" id="bmb:BruAb2_0982"/>
<dbReference type="HOGENOM" id="CLU_060296_2_0_5"/>
<dbReference type="Proteomes" id="UP000000540">
    <property type="component" value="Chromosome II"/>
</dbReference>
<dbReference type="GO" id="GO:0005886">
    <property type="term" value="C:plasma membrane"/>
    <property type="evidence" value="ECO:0007669"/>
    <property type="project" value="UniProtKB-SubCell"/>
</dbReference>
<dbReference type="GO" id="GO:0050380">
    <property type="term" value="F:undecaprenyl-diphosphatase activity"/>
    <property type="evidence" value="ECO:0007669"/>
    <property type="project" value="UniProtKB-UniRule"/>
</dbReference>
<dbReference type="GO" id="GO:0071555">
    <property type="term" value="P:cell wall organization"/>
    <property type="evidence" value="ECO:0007669"/>
    <property type="project" value="UniProtKB-KW"/>
</dbReference>
<dbReference type="GO" id="GO:0009252">
    <property type="term" value="P:peptidoglycan biosynthetic process"/>
    <property type="evidence" value="ECO:0007669"/>
    <property type="project" value="UniProtKB-KW"/>
</dbReference>
<dbReference type="GO" id="GO:0008360">
    <property type="term" value="P:regulation of cell shape"/>
    <property type="evidence" value="ECO:0007669"/>
    <property type="project" value="UniProtKB-KW"/>
</dbReference>
<dbReference type="GO" id="GO:0046677">
    <property type="term" value="P:response to antibiotic"/>
    <property type="evidence" value="ECO:0007669"/>
    <property type="project" value="UniProtKB-UniRule"/>
</dbReference>
<dbReference type="HAMAP" id="MF_01006">
    <property type="entry name" value="Undec_diphosphatase"/>
    <property type="match status" value="1"/>
</dbReference>
<dbReference type="InterPro" id="IPR003824">
    <property type="entry name" value="UppP"/>
</dbReference>
<dbReference type="NCBIfam" id="NF001389">
    <property type="entry name" value="PRK00281.1-2"/>
    <property type="match status" value="1"/>
</dbReference>
<dbReference type="NCBIfam" id="TIGR00753">
    <property type="entry name" value="undec_PP_bacA"/>
    <property type="match status" value="1"/>
</dbReference>
<dbReference type="PANTHER" id="PTHR30622">
    <property type="entry name" value="UNDECAPRENYL-DIPHOSPHATASE"/>
    <property type="match status" value="1"/>
</dbReference>
<dbReference type="PANTHER" id="PTHR30622:SF3">
    <property type="entry name" value="UNDECAPRENYL-DIPHOSPHATASE"/>
    <property type="match status" value="1"/>
</dbReference>
<dbReference type="Pfam" id="PF02673">
    <property type="entry name" value="BacA"/>
    <property type="match status" value="1"/>
</dbReference>
<proteinExistence type="inferred from homology"/>